<evidence type="ECO:0000255" key="1">
    <source>
        <dbReference type="PROSITE-ProRule" id="PRU01266"/>
    </source>
</evidence>
<evidence type="ECO:0000269" key="2">
    <source>
    </source>
</evidence>
<evidence type="ECO:0000269" key="3">
    <source>
    </source>
</evidence>
<evidence type="ECO:0000269" key="4">
    <source>
    </source>
</evidence>
<evidence type="ECO:0000269" key="5">
    <source>
    </source>
</evidence>
<evidence type="ECO:0000269" key="6">
    <source>
    </source>
</evidence>
<evidence type="ECO:0000269" key="7">
    <source>
    </source>
</evidence>
<evidence type="ECO:0000269" key="8">
    <source>
    </source>
</evidence>
<evidence type="ECO:0000305" key="9"/>
<evidence type="ECO:0007829" key="10">
    <source>
        <dbReference type="PDB" id="2A5H"/>
    </source>
</evidence>
<sequence length="416" mass="47102">MINRRYELFKDVSDADWNDWRWQVRNRIETVEELKKYIPLTKEEEEGVAQCVKSLRMAITPYYLSLIDPNDPNDPVRKQAIPTALELNKAAADLEDPLHEDTDSPVPGLTHRYPDRVLLLITDMCSMYCRHCTRRRFAGQSDDSMPMERIDKAIDYIRNTPQVRDVLLSGGDALLVSDETLEYIIAKLREIPHVEIVRIGSRTPVVLPQRITPELVNMLKKYHPVWLNTHFNHPNEITEESTRACQLLADAGVPLGNQSVLLRGVNDCVHVMKELVNKLVKIRVRPYYIYQCDLSLGLEHFRTPVSKGIEIIEGLRGHTSGYCVPTFVVDAPGGGGKTPVMPNYVISQSHDKVILRNFEGVITTYSEPINYTPGCNCDVCTGKKKVHKVGVAGLLNGEGMALEPVGLERNKRHVQE</sequence>
<comment type="function">
    <text evidence="3 6 8">Catalyzes the interconversion of L-alpha-lysine and L-beta-lysine.</text>
</comment>
<comment type="catalytic activity">
    <reaction evidence="8">
        <text>L-lysine = (3S)-3,6-diaminohexanoate</text>
        <dbReference type="Rhea" id="RHEA:19177"/>
        <dbReference type="ChEBI" id="CHEBI:32551"/>
        <dbReference type="ChEBI" id="CHEBI:57434"/>
        <dbReference type="EC" id="5.4.3.2"/>
    </reaction>
</comment>
<comment type="cofactor">
    <cofactor>
        <name>[4Fe-4S] cluster</name>
        <dbReference type="ChEBI" id="CHEBI:49883"/>
    </cofactor>
    <text>Binds 1 [4Fe-4S] cluster per subunit. The cluster is coordinated with 3 cysteines and an exchangeable S-adenosyl-L-methionine.</text>
</comment>
<comment type="cofactor">
    <cofactor>
        <name>pyridoxal 5'-phosphate</name>
        <dbReference type="ChEBI" id="CHEBI:597326"/>
    </cofactor>
</comment>
<comment type="cofactor">
    <cofactor>
        <name>Co(2+)</name>
        <dbReference type="ChEBI" id="CHEBI:48828"/>
    </cofactor>
    <text>Binds 1 Co(2+) ion per subunit.</text>
</comment>
<comment type="cofactor">
    <cofactor>
        <name>Zn(2+)</name>
        <dbReference type="ChEBI" id="CHEBI:29105"/>
    </cofactor>
    <text>Binds 1 zinc ion per subunit.</text>
</comment>
<comment type="activity regulation">
    <text evidence="2 6 8">The enzyme is activated by S-adenosyl-methionine. Activity is dependent on the levels of Fe(2+), S(2-) and Co(2+). Activity is stimulated by addition of EDTA. S-adenosylhomocysteine competitively inhibits the activity whereas 5'-methylthioadenosine is not inhibitory in the presence of S-adenosylmethionine. Competitively inhibited by 4-thialysine. Inhibited by sodium borohydride (1 mM) when added with 2 mM dithionate. Moderately inhibited by beta-mercaptoethanol (30 mM) along with dithionate. Higher concentrations of Fe(2+) partially inhibit the activity and Co(2+) at 1 mM is a strong inhibitor. Hydroxylamine, isonicotinic acid hydrazide inhibit effectively, in addition, hydrazine, D-penicillamine and D-cycloserine are also inhibitory at high concentrations.</text>
</comment>
<comment type="biophysicochemical properties">
    <kinetics>
        <KM evidence="2 3 8">6.6 uM for L-lysine</KM>
        <KM evidence="2 3 8">28 nM for adenosylmethionine</KM>
        <KM evidence="2 3 8">1.4 mM for 4-thialysine</KM>
        <Vmax evidence="2 3 8">0.19 umol/min/mg enzyme with 4-thialysine as substrate (at 37 degrees Celsius and pH 8)</Vmax>
    </kinetics>
    <phDependence>
        <text evidence="2 3 8">Optimum pH is 8.0. Displays half maximal activity between pH 6.0 and 9.8.</text>
    </phDependence>
    <redoxPotential>
        <text evidence="2 3 8">E(0) is between -336 and -370 mV for 4Fe-4S cluster.</text>
    </redoxPotential>
    <temperatureDependence>
        <text evidence="2 3 8">Optimum temperature is 37 degrees Celsius. It has strong activity at 37 degrees Celsius but is reversibly inactivated in temperatures between 37 and 65 degrees Celsius. Minimal loss of activity is observed in enzyme stored at -10 degrees Celsius in the presence of 15% glycerol.</text>
    </temperatureDependence>
</comment>
<comment type="pathway">
    <text>Amino-acid degradation; L-lysine degradation via acetate pathway.</text>
</comment>
<comment type="subunit">
    <text evidence="4 7">Homohexamer; trimer of dimers. Forms a homotetramer in crystal.</text>
</comment>
<comment type="similarity">
    <text evidence="9">Belongs to the radical SAM superfamily. KamA family.</text>
</comment>
<gene>
    <name type="primary">kamA</name>
</gene>
<keyword id="KW-0002">3D-structure</keyword>
<keyword id="KW-0004">4Fe-4S</keyword>
<keyword id="KW-0170">Cobalt</keyword>
<keyword id="KW-0903">Direct protein sequencing</keyword>
<keyword id="KW-0408">Iron</keyword>
<keyword id="KW-0411">Iron-sulfur</keyword>
<keyword id="KW-0413">Isomerase</keyword>
<keyword id="KW-0479">Metal-binding</keyword>
<keyword id="KW-0663">Pyridoxal phosphate</keyword>
<keyword id="KW-0949">S-adenosyl-L-methionine</keyword>
<keyword id="KW-0862">Zinc</keyword>
<accession>Q9XBQ8</accession>
<organism>
    <name type="scientific">Clostridium subterminale</name>
    <dbReference type="NCBI Taxonomy" id="1550"/>
    <lineage>
        <taxon>Bacteria</taxon>
        <taxon>Bacillati</taxon>
        <taxon>Bacillota</taxon>
        <taxon>Clostridia</taxon>
        <taxon>Eubacteriales</taxon>
        <taxon>Clostridiaceae</taxon>
        <taxon>Clostridium</taxon>
    </lineage>
</organism>
<name>KAMA_CLOSU</name>
<feature type="chain" id="PRO_0000172287" description="L-lysine 2,3-aminomutase">
    <location>
        <begin position="1"/>
        <end position="416"/>
    </location>
</feature>
<feature type="domain" description="Radical SAM core" evidence="1">
    <location>
        <begin position="111"/>
        <end position="322"/>
    </location>
</feature>
<feature type="binding site">
    <location>
        <position position="125"/>
    </location>
    <ligand>
        <name>[4Fe-4S] cluster</name>
        <dbReference type="ChEBI" id="CHEBI:49883"/>
        <note>4Fe-4S-S-AdoMet</note>
    </ligand>
</feature>
<feature type="binding site">
    <location>
        <position position="129"/>
    </location>
    <ligand>
        <name>[4Fe-4S] cluster</name>
        <dbReference type="ChEBI" id="CHEBI:49883"/>
        <note>4Fe-4S-S-AdoMet</note>
    </ligand>
</feature>
<feature type="binding site">
    <location>
        <position position="132"/>
    </location>
    <ligand>
        <name>[4Fe-4S] cluster</name>
        <dbReference type="ChEBI" id="CHEBI:49883"/>
        <note>4Fe-4S-S-AdoMet</note>
    </ligand>
</feature>
<feature type="binding site">
    <location>
        <position position="268"/>
    </location>
    <ligand>
        <name>Zn(2+)</name>
        <dbReference type="ChEBI" id="CHEBI:29105"/>
    </ligand>
</feature>
<feature type="binding site">
    <location>
        <position position="375"/>
    </location>
    <ligand>
        <name>Zn(2+)</name>
        <dbReference type="ChEBI" id="CHEBI:29105"/>
    </ligand>
</feature>
<feature type="binding site">
    <location>
        <position position="377"/>
    </location>
    <ligand>
        <name>Zn(2+)</name>
        <dbReference type="ChEBI" id="CHEBI:29105"/>
    </ligand>
</feature>
<feature type="binding site">
    <location>
        <position position="380"/>
    </location>
    <ligand>
        <name>Zn(2+)</name>
        <dbReference type="ChEBI" id="CHEBI:29105"/>
    </ligand>
</feature>
<feature type="modified residue" description="N6-(pyridoxal phosphate)lysine">
    <location>
        <position position="337"/>
    </location>
</feature>
<feature type="mutagenesis site" description="Reduction in activity. Decrease in iron and sulfide and PLP content." evidence="5">
    <original>E</original>
    <variation>Q</variation>
    <location>
        <position position="86"/>
    </location>
</feature>
<feature type="mutagenesis site" description="Reduction in activity. Decrease in iron and sulfide and PLP content." evidence="5">
    <original>D</original>
    <variation>N</variation>
    <location>
        <position position="96"/>
    </location>
</feature>
<feature type="mutagenesis site" description="Complete loss of activity. Decrease in iron and sulfide but not PLP content. Destabilise the iron-sulfur centers." evidence="5">
    <original>R</original>
    <variation>Q</variation>
    <variation>K</variation>
    <location>
        <position position="130"/>
    </location>
</feature>
<feature type="mutagenesis site" description="Complete loss of activity. Significant decrease in iron and sulfide and PLP content." evidence="5">
    <original>R</original>
    <variation>K</variation>
    <location>
        <position position="134"/>
    </location>
</feature>
<feature type="mutagenesis site" description="Complete loss of activity. Slight decrease in iron and sulfide and PLP content." evidence="5">
    <original>R</original>
    <variation>Q</variation>
    <location>
        <position position="134"/>
    </location>
</feature>
<feature type="mutagenesis site" description="Reduction in activity. Decrease in iron and sulfide and PLP content." evidence="5">
    <original>R</original>
    <variation>K</variation>
    <location>
        <position position="135"/>
    </location>
</feature>
<feature type="mutagenesis site" description="Reduction in activity. Significant decrease in iron and sulfide and PLP content." evidence="5">
    <original>R</original>
    <variation>Q</variation>
    <location>
        <position position="135"/>
    </location>
</feature>
<feature type="mutagenesis site" description="Reduction in activity. Significant decrease in iron and sulfide and PLP content." evidence="5">
    <original>R</original>
    <variation>Q</variation>
    <location>
        <position position="136"/>
    </location>
</feature>
<feature type="mutagenesis site" description="Significant reduction in activity. Decrease in iron and sulfide and PLP content." evidence="5">
    <original>D</original>
    <variation>N</variation>
    <location>
        <position position="165"/>
    </location>
</feature>
<feature type="mutagenesis site" description="Complete loss of activity. Decrease in iron and sulfide and PLP content. Destabilise the iron-sulfur centers." evidence="5">
    <original>D</original>
    <variation>N</variation>
    <location>
        <position position="172"/>
    </location>
</feature>
<feature type="mutagenesis site" description="Significant reduction in activity. Decrease in iron and sulfide and PLP content." evidence="5">
    <original>E</original>
    <variation>Q</variation>
    <location>
        <position position="236"/>
    </location>
</feature>
<feature type="mutagenesis site" description="Complete loss of activity. Decrease in iron and sulfide and PLP content." evidence="5">
    <original>D</original>
    <variation>N</variation>
    <location>
        <position position="293"/>
    </location>
</feature>
<feature type="mutagenesis site" description="Complete loss of activity. Decrease in iron and sulfide and PLP content." evidence="5">
    <original>D</original>
    <variation>A</variation>
    <variation>N</variation>
    <location>
        <position position="330"/>
    </location>
</feature>
<feature type="helix" evidence="10">
    <location>
        <begin position="4"/>
        <end position="8"/>
    </location>
</feature>
<feature type="helix" evidence="10">
    <location>
        <begin position="14"/>
        <end position="17"/>
    </location>
</feature>
<feature type="helix" evidence="10">
    <location>
        <begin position="20"/>
        <end position="25"/>
    </location>
</feature>
<feature type="helix" evidence="10">
    <location>
        <begin position="31"/>
        <end position="35"/>
    </location>
</feature>
<feature type="helix" evidence="10">
    <location>
        <begin position="42"/>
        <end position="49"/>
    </location>
</feature>
<feature type="helix" evidence="10">
    <location>
        <begin position="61"/>
        <end position="64"/>
    </location>
</feature>
<feature type="helix" evidence="10">
    <location>
        <begin position="75"/>
        <end position="80"/>
    </location>
</feature>
<feature type="helix" evidence="10">
    <location>
        <begin position="84"/>
        <end position="87"/>
    </location>
</feature>
<feature type="strand" evidence="10">
    <location>
        <begin position="94"/>
        <end position="96"/>
    </location>
</feature>
<feature type="turn" evidence="10">
    <location>
        <begin position="100"/>
        <end position="102"/>
    </location>
</feature>
<feature type="strand" evidence="10">
    <location>
        <begin position="113"/>
        <end position="123"/>
    </location>
</feature>
<feature type="turn" evidence="10">
    <location>
        <begin position="133"/>
        <end position="139"/>
    </location>
</feature>
<feature type="strand" evidence="10">
    <location>
        <begin position="140"/>
        <end position="144"/>
    </location>
</feature>
<feature type="helix" evidence="10">
    <location>
        <begin position="147"/>
        <end position="158"/>
    </location>
</feature>
<feature type="strand" evidence="10">
    <location>
        <begin position="165"/>
        <end position="171"/>
    </location>
</feature>
<feature type="helix" evidence="10">
    <location>
        <begin position="178"/>
        <end position="189"/>
    </location>
</feature>
<feature type="strand" evidence="10">
    <location>
        <begin position="196"/>
        <end position="200"/>
    </location>
</feature>
<feature type="helix" evidence="10">
    <location>
        <begin position="203"/>
        <end position="206"/>
    </location>
</feature>
<feature type="helix" evidence="10">
    <location>
        <begin position="208"/>
        <end position="210"/>
    </location>
</feature>
<feature type="helix" evidence="10">
    <location>
        <begin position="213"/>
        <end position="219"/>
    </location>
</feature>
<feature type="helix" evidence="10">
    <location>
        <begin position="220"/>
        <end position="222"/>
    </location>
</feature>
<feature type="strand" evidence="10">
    <location>
        <begin position="224"/>
        <end position="229"/>
    </location>
</feature>
<feature type="helix" evidence="10">
    <location>
        <begin position="234"/>
        <end position="236"/>
    </location>
</feature>
<feature type="helix" evidence="10">
    <location>
        <begin position="239"/>
        <end position="250"/>
    </location>
</feature>
<feature type="strand" evidence="10">
    <location>
        <begin position="255"/>
        <end position="260"/>
    </location>
</feature>
<feature type="turn" evidence="10">
    <location>
        <begin position="263"/>
        <end position="265"/>
    </location>
</feature>
<feature type="helix" evidence="10">
    <location>
        <begin position="269"/>
        <end position="281"/>
    </location>
</feature>
<feature type="strand" evidence="10">
    <location>
        <begin position="284"/>
        <end position="290"/>
    </location>
</feature>
<feature type="helix" evidence="10">
    <location>
        <begin position="299"/>
        <end position="301"/>
    </location>
</feature>
<feature type="helix" evidence="10">
    <location>
        <begin position="305"/>
        <end position="313"/>
    </location>
</feature>
<feature type="helix" evidence="10">
    <location>
        <begin position="321"/>
        <end position="323"/>
    </location>
</feature>
<feature type="strand" evidence="10">
    <location>
        <begin position="326"/>
        <end position="331"/>
    </location>
</feature>
<feature type="turn" evidence="10">
    <location>
        <begin position="332"/>
        <end position="335"/>
    </location>
</feature>
<feature type="strand" evidence="10">
    <location>
        <begin position="336"/>
        <end position="339"/>
    </location>
</feature>
<feature type="strand" evidence="10">
    <location>
        <begin position="345"/>
        <end position="349"/>
    </location>
</feature>
<feature type="strand" evidence="10">
    <location>
        <begin position="352"/>
        <end position="356"/>
    </location>
</feature>
<feature type="strand" evidence="10">
    <location>
        <begin position="362"/>
        <end position="366"/>
    </location>
</feature>
<feature type="turn" evidence="10">
    <location>
        <begin position="378"/>
        <end position="382"/>
    </location>
</feature>
<feature type="helix" evidence="10">
    <location>
        <begin position="390"/>
        <end position="395"/>
    </location>
</feature>
<feature type="strand" evidence="10">
    <location>
        <begin position="400"/>
        <end position="402"/>
    </location>
</feature>
<feature type="helix" evidence="10">
    <location>
        <begin position="408"/>
        <end position="410"/>
    </location>
</feature>
<protein>
    <recommendedName>
        <fullName>L-lysine 2,3-aminomutase</fullName>
        <shortName>LAM</shortName>
        <ecNumber>5.4.3.2</ecNumber>
    </recommendedName>
    <alternativeName>
        <fullName>KAM</fullName>
    </alternativeName>
</protein>
<reference key="1">
    <citation type="journal article" date="2000" name="J. Bacteriol.">
        <title>Lysine 2,3-aminomutase from Clostridium subterminale SB4: mass spectral characterization of cyanogen bromide-treated peptides and cloning, sequencing, and expression of the gene kamA in Escherichia coli.</title>
        <authorList>
            <person name="Ruzicka F.J."/>
            <person name="Lieder K.W."/>
            <person name="Frey P.A."/>
        </authorList>
    </citation>
    <scope>NUCLEOTIDE SEQUENCE [GENOMIC DNA]</scope>
    <scope>PROTEIN SEQUENCE OF 1-16; 342-389 AND 401-416</scope>
    <scope>CHARACTERIZATION</scope>
    <source>
        <strain>SB4</strain>
    </source>
</reference>
<reference key="2">
    <citation type="journal article" date="1970" name="J. Biol. Chem.">
        <title>Lysine 2,3-aminomutase. Purification and properties of a pyridoxal phosphate and S-adenosylmethionine-activated enzyme.</title>
        <authorList>
            <person name="Chirpich T.P."/>
            <person name="Zappia V."/>
            <person name="Costilow R.N."/>
            <person name="Barker H.A."/>
        </authorList>
    </citation>
    <scope>FUNCTION</scope>
    <scope>CATALYTIC ACTIVITY</scope>
    <scope>COFACTOR</scope>
    <scope>BIOPHYSICOCHEMICAL PROPERTIES</scope>
    <scope>ACTIVITY REGULATION</scope>
</reference>
<reference key="3">
    <citation type="journal article" date="1991" name="J. Biol. Chem.">
        <title>Molecular properties of lysine-2,3-aminomutase.</title>
        <authorList>
            <person name="Song K.B."/>
            <person name="Frey P.A."/>
        </authorList>
    </citation>
    <scope>SUBUNIT</scope>
    <source>
        <strain>SB4</strain>
    </source>
</reference>
<reference key="4">
    <citation type="journal article" date="1991" name="J. Biol. Chem.">
        <title>Metal cofactors of lysine-2,3-aminomutase.</title>
        <authorList>
            <person name="Petrovich R.M."/>
            <person name="Ruzicka F.J."/>
            <person name="Reed G.H."/>
            <person name="Frey P.A."/>
        </authorList>
    </citation>
    <scope>FUNCTION</scope>
    <scope>COFACTOR</scope>
    <scope>ACTIVITY REGULATION</scope>
</reference>
<reference key="5">
    <citation type="journal article" date="1992" name="Biochemistry">
        <title>Characterization of iron-sulfur clusters in lysine 2,3-aminomutase by electron paramagnetic resonance spectroscopy.</title>
        <authorList>
            <person name="Petrovich R.M."/>
            <person name="Ruzicka F.J."/>
            <person name="Reed G.H."/>
            <person name="Frey P.A."/>
        </authorList>
    </citation>
    <scope>FUNCTION</scope>
    <scope>COFACTOR</scope>
    <scope>BIOPHYSICOCHEMICAL PROPERTIES</scope>
</reference>
<reference key="6">
    <citation type="journal article" date="2001" name="Arch. Biochem. Biophys.">
        <title>Inhibition of lysine 2,3-aminomutase by the alternative substrate 4-thialysine and characterization of the 4-thialysyl radical intermediate.</title>
        <authorList>
            <person name="Miller J."/>
            <person name="Bandarian V."/>
            <person name="Reed G.H."/>
            <person name="Frey P.A."/>
        </authorList>
    </citation>
    <scope>ACTIVITY REGULATION</scope>
    <scope>BIOPHYSICOCHEMICAL PROPERTIES</scope>
</reference>
<reference key="7">
    <citation type="journal article" date="2006" name="Biochemistry">
        <title>Identification of structural and catalytic classes of highly conserved amino acid residues in lysine 2,3-aminomutase.</title>
        <authorList>
            <person name="Chen D."/>
            <person name="Frey P.A."/>
            <person name="Lepore B.W."/>
            <person name="Ringe D."/>
            <person name="Ruzicka F.J."/>
        </authorList>
    </citation>
    <scope>MUTAGENESIS OF GLU-86; ASP-96; ARG-130; ARG-134; ARG-135; ARG-136; ASP-165; ASP-172; GLU-236; ASP-293 AND ASP-330</scope>
</reference>
<reference key="8">
    <citation type="journal article" date="2005" name="Proc. Natl. Acad. Sci. U.S.A.">
        <title>The X-ray crystal structure of lysine-2,3-aminomutase from Clostridium subterminale.</title>
        <authorList>
            <person name="Lepore B.W."/>
            <person name="Ruzicka F.J."/>
            <person name="Frey P.A."/>
            <person name="Ringe D."/>
        </authorList>
    </citation>
    <scope>X-RAY CRYSTALLOGRAPHY (2.1 ANGSTROMS) IN COMPLEX WITH SUBSTRATE AND COFACTOR</scope>
    <source>
        <strain>SB4</strain>
    </source>
</reference>
<proteinExistence type="evidence at protein level"/>
<dbReference type="EC" id="5.4.3.2"/>
<dbReference type="EMBL" id="AF159146">
    <property type="protein sequence ID" value="AAD43134.1"/>
    <property type="molecule type" value="Genomic_DNA"/>
</dbReference>
<dbReference type="PDB" id="2A5H">
    <property type="method" value="X-ray"/>
    <property type="resolution" value="2.10 A"/>
    <property type="chains" value="A/B/C/D=1-416"/>
</dbReference>
<dbReference type="PDBsum" id="2A5H"/>
<dbReference type="SMR" id="Q9XBQ8"/>
<dbReference type="BioCyc" id="MetaCyc:MONOMER-12270"/>
<dbReference type="BRENDA" id="5.4.3.2">
    <property type="organism ID" value="1523"/>
</dbReference>
<dbReference type="UniPathway" id="UPA00870"/>
<dbReference type="EvolutionaryTrace" id="Q9XBQ8"/>
<dbReference type="GO" id="GO:0051539">
    <property type="term" value="F:4 iron, 4 sulfur cluster binding"/>
    <property type="evidence" value="ECO:0007669"/>
    <property type="project" value="UniProtKB-KW"/>
</dbReference>
<dbReference type="GO" id="GO:0050066">
    <property type="term" value="F:L-lysine 2,3-aminomutase activity"/>
    <property type="evidence" value="ECO:0007669"/>
    <property type="project" value="UniProtKB-EC"/>
</dbReference>
<dbReference type="GO" id="GO:0046872">
    <property type="term" value="F:metal ion binding"/>
    <property type="evidence" value="ECO:0007669"/>
    <property type="project" value="UniProtKB-KW"/>
</dbReference>
<dbReference type="GO" id="GO:0019475">
    <property type="term" value="P:L-lysine catabolic process to acetate"/>
    <property type="evidence" value="ECO:0007669"/>
    <property type="project" value="UniProtKB-UniPathway"/>
</dbReference>
<dbReference type="CDD" id="cd01335">
    <property type="entry name" value="Radical_SAM"/>
    <property type="match status" value="1"/>
</dbReference>
<dbReference type="FunFam" id="3.20.20.70:FF:000095">
    <property type="entry name" value="Lysine 2,3-aminomutase"/>
    <property type="match status" value="1"/>
</dbReference>
<dbReference type="Gene3D" id="6.10.140.1170">
    <property type="match status" value="1"/>
</dbReference>
<dbReference type="Gene3D" id="6.20.120.40">
    <property type="match status" value="1"/>
</dbReference>
<dbReference type="Gene3D" id="3.20.20.70">
    <property type="entry name" value="Aldolase class I"/>
    <property type="match status" value="1"/>
</dbReference>
<dbReference type="InterPro" id="IPR013785">
    <property type="entry name" value="Aldolase_TIM"/>
</dbReference>
<dbReference type="InterPro" id="IPR025895">
    <property type="entry name" value="LAM_C_dom"/>
</dbReference>
<dbReference type="InterPro" id="IPR003739">
    <property type="entry name" value="Lys_aminomutase/Glu_NH3_mut"/>
</dbReference>
<dbReference type="InterPro" id="IPR022459">
    <property type="entry name" value="Lysine_aminomutase"/>
</dbReference>
<dbReference type="InterPro" id="IPR007197">
    <property type="entry name" value="rSAM"/>
</dbReference>
<dbReference type="NCBIfam" id="TIGR00238">
    <property type="entry name" value="KamA family radical SAM protein"/>
    <property type="match status" value="1"/>
</dbReference>
<dbReference type="NCBIfam" id="TIGR03820">
    <property type="entry name" value="lys_2_3_AblA"/>
    <property type="match status" value="1"/>
</dbReference>
<dbReference type="PANTHER" id="PTHR30538:SF1">
    <property type="entry name" value="L-LYSINE 2,3-AMINOMUTASE"/>
    <property type="match status" value="1"/>
</dbReference>
<dbReference type="PANTHER" id="PTHR30538">
    <property type="entry name" value="LYSINE 2,3-AMINOMUTASE-RELATED"/>
    <property type="match status" value="1"/>
</dbReference>
<dbReference type="Pfam" id="PF12544">
    <property type="entry name" value="LAM_C"/>
    <property type="match status" value="1"/>
</dbReference>
<dbReference type="Pfam" id="PF04055">
    <property type="entry name" value="Radical_SAM"/>
    <property type="match status" value="1"/>
</dbReference>
<dbReference type="PIRSF" id="PIRSF004911">
    <property type="entry name" value="DUF160"/>
    <property type="match status" value="1"/>
</dbReference>
<dbReference type="SFLD" id="SFLDF00283">
    <property type="entry name" value="L-lysine_2_3-aminomutase_(LAM"/>
    <property type="match status" value="1"/>
</dbReference>
<dbReference type="SFLD" id="SFLDG01070">
    <property type="entry name" value="PLP-dependent"/>
    <property type="match status" value="1"/>
</dbReference>
<dbReference type="SUPFAM" id="SSF102114">
    <property type="entry name" value="Radical SAM enzymes"/>
    <property type="match status" value="1"/>
</dbReference>
<dbReference type="PROSITE" id="PS51918">
    <property type="entry name" value="RADICAL_SAM"/>
    <property type="match status" value="1"/>
</dbReference>